<proteinExistence type="evidence at protein level"/>
<gene>
    <name type="primary">Glipr1l2</name>
</gene>
<organism>
    <name type="scientific">Mus musculus</name>
    <name type="common">Mouse</name>
    <dbReference type="NCBI Taxonomy" id="10090"/>
    <lineage>
        <taxon>Eukaryota</taxon>
        <taxon>Metazoa</taxon>
        <taxon>Chordata</taxon>
        <taxon>Craniata</taxon>
        <taxon>Vertebrata</taxon>
        <taxon>Euteleostomi</taxon>
        <taxon>Mammalia</taxon>
        <taxon>Eutheria</taxon>
        <taxon>Euarchontoglires</taxon>
        <taxon>Glires</taxon>
        <taxon>Rodentia</taxon>
        <taxon>Myomorpha</taxon>
        <taxon>Muroidea</taxon>
        <taxon>Muridae</taxon>
        <taxon>Murinae</taxon>
        <taxon>Mus</taxon>
        <taxon>Mus</taxon>
    </lineage>
</organism>
<reference key="1">
    <citation type="journal article" date="2005" name="Science">
        <title>The transcriptional landscape of the mammalian genome.</title>
        <authorList>
            <person name="Carninci P."/>
            <person name="Kasukawa T."/>
            <person name="Katayama S."/>
            <person name="Gough J."/>
            <person name="Frith M.C."/>
            <person name="Maeda N."/>
            <person name="Oyama R."/>
            <person name="Ravasi T."/>
            <person name="Lenhard B."/>
            <person name="Wells C."/>
            <person name="Kodzius R."/>
            <person name="Shimokawa K."/>
            <person name="Bajic V.B."/>
            <person name="Brenner S.E."/>
            <person name="Batalov S."/>
            <person name="Forrest A.R."/>
            <person name="Zavolan M."/>
            <person name="Davis M.J."/>
            <person name="Wilming L.G."/>
            <person name="Aidinis V."/>
            <person name="Allen J.E."/>
            <person name="Ambesi-Impiombato A."/>
            <person name="Apweiler R."/>
            <person name="Aturaliya R.N."/>
            <person name="Bailey T.L."/>
            <person name="Bansal M."/>
            <person name="Baxter L."/>
            <person name="Beisel K.W."/>
            <person name="Bersano T."/>
            <person name="Bono H."/>
            <person name="Chalk A.M."/>
            <person name="Chiu K.P."/>
            <person name="Choudhary V."/>
            <person name="Christoffels A."/>
            <person name="Clutterbuck D.R."/>
            <person name="Crowe M.L."/>
            <person name="Dalla E."/>
            <person name="Dalrymple B.P."/>
            <person name="de Bono B."/>
            <person name="Della Gatta G."/>
            <person name="di Bernardo D."/>
            <person name="Down T."/>
            <person name="Engstrom P."/>
            <person name="Fagiolini M."/>
            <person name="Faulkner G."/>
            <person name="Fletcher C.F."/>
            <person name="Fukushima T."/>
            <person name="Furuno M."/>
            <person name="Futaki S."/>
            <person name="Gariboldi M."/>
            <person name="Georgii-Hemming P."/>
            <person name="Gingeras T.R."/>
            <person name="Gojobori T."/>
            <person name="Green R.E."/>
            <person name="Gustincich S."/>
            <person name="Harbers M."/>
            <person name="Hayashi Y."/>
            <person name="Hensch T.K."/>
            <person name="Hirokawa N."/>
            <person name="Hill D."/>
            <person name="Huminiecki L."/>
            <person name="Iacono M."/>
            <person name="Ikeo K."/>
            <person name="Iwama A."/>
            <person name="Ishikawa T."/>
            <person name="Jakt M."/>
            <person name="Kanapin A."/>
            <person name="Katoh M."/>
            <person name="Kawasawa Y."/>
            <person name="Kelso J."/>
            <person name="Kitamura H."/>
            <person name="Kitano H."/>
            <person name="Kollias G."/>
            <person name="Krishnan S.P."/>
            <person name="Kruger A."/>
            <person name="Kummerfeld S.K."/>
            <person name="Kurochkin I.V."/>
            <person name="Lareau L.F."/>
            <person name="Lazarevic D."/>
            <person name="Lipovich L."/>
            <person name="Liu J."/>
            <person name="Liuni S."/>
            <person name="McWilliam S."/>
            <person name="Madan Babu M."/>
            <person name="Madera M."/>
            <person name="Marchionni L."/>
            <person name="Matsuda H."/>
            <person name="Matsuzawa S."/>
            <person name="Miki H."/>
            <person name="Mignone F."/>
            <person name="Miyake S."/>
            <person name="Morris K."/>
            <person name="Mottagui-Tabar S."/>
            <person name="Mulder N."/>
            <person name="Nakano N."/>
            <person name="Nakauchi H."/>
            <person name="Ng P."/>
            <person name="Nilsson R."/>
            <person name="Nishiguchi S."/>
            <person name="Nishikawa S."/>
            <person name="Nori F."/>
            <person name="Ohara O."/>
            <person name="Okazaki Y."/>
            <person name="Orlando V."/>
            <person name="Pang K.C."/>
            <person name="Pavan W.J."/>
            <person name="Pavesi G."/>
            <person name="Pesole G."/>
            <person name="Petrovsky N."/>
            <person name="Piazza S."/>
            <person name="Reed J."/>
            <person name="Reid J.F."/>
            <person name="Ring B.Z."/>
            <person name="Ringwald M."/>
            <person name="Rost B."/>
            <person name="Ruan Y."/>
            <person name="Salzberg S.L."/>
            <person name="Sandelin A."/>
            <person name="Schneider C."/>
            <person name="Schoenbach C."/>
            <person name="Sekiguchi K."/>
            <person name="Semple C.A."/>
            <person name="Seno S."/>
            <person name="Sessa L."/>
            <person name="Sheng Y."/>
            <person name="Shibata Y."/>
            <person name="Shimada H."/>
            <person name="Shimada K."/>
            <person name="Silva D."/>
            <person name="Sinclair B."/>
            <person name="Sperling S."/>
            <person name="Stupka E."/>
            <person name="Sugiura K."/>
            <person name="Sultana R."/>
            <person name="Takenaka Y."/>
            <person name="Taki K."/>
            <person name="Tammoja K."/>
            <person name="Tan S.L."/>
            <person name="Tang S."/>
            <person name="Taylor M.S."/>
            <person name="Tegner J."/>
            <person name="Teichmann S.A."/>
            <person name="Ueda H.R."/>
            <person name="van Nimwegen E."/>
            <person name="Verardo R."/>
            <person name="Wei C.L."/>
            <person name="Yagi K."/>
            <person name="Yamanishi H."/>
            <person name="Zabarovsky E."/>
            <person name="Zhu S."/>
            <person name="Zimmer A."/>
            <person name="Hide W."/>
            <person name="Bult C."/>
            <person name="Grimmond S.M."/>
            <person name="Teasdale R.D."/>
            <person name="Liu E.T."/>
            <person name="Brusic V."/>
            <person name="Quackenbush J."/>
            <person name="Wahlestedt C."/>
            <person name="Mattick J.S."/>
            <person name="Hume D.A."/>
            <person name="Kai C."/>
            <person name="Sasaki D."/>
            <person name="Tomaru Y."/>
            <person name="Fukuda S."/>
            <person name="Kanamori-Katayama M."/>
            <person name="Suzuki M."/>
            <person name="Aoki J."/>
            <person name="Arakawa T."/>
            <person name="Iida J."/>
            <person name="Imamura K."/>
            <person name="Itoh M."/>
            <person name="Kato T."/>
            <person name="Kawaji H."/>
            <person name="Kawagashira N."/>
            <person name="Kawashima T."/>
            <person name="Kojima M."/>
            <person name="Kondo S."/>
            <person name="Konno H."/>
            <person name="Nakano K."/>
            <person name="Ninomiya N."/>
            <person name="Nishio T."/>
            <person name="Okada M."/>
            <person name="Plessy C."/>
            <person name="Shibata K."/>
            <person name="Shiraki T."/>
            <person name="Suzuki S."/>
            <person name="Tagami M."/>
            <person name="Waki K."/>
            <person name="Watahiki A."/>
            <person name="Okamura-Oho Y."/>
            <person name="Suzuki H."/>
            <person name="Kawai J."/>
            <person name="Hayashizaki Y."/>
        </authorList>
    </citation>
    <scope>NUCLEOTIDE SEQUENCE [LARGE SCALE MRNA] (ISOFORM 1)</scope>
    <source>
        <strain>C57BL/6J</strain>
        <tissue>Testis</tissue>
    </source>
</reference>
<reference key="2">
    <citation type="journal article" date="2004" name="Genome Res.">
        <title>The status, quality, and expansion of the NIH full-length cDNA project: the Mammalian Gene Collection (MGC).</title>
        <authorList>
            <consortium name="The MGC Project Team"/>
        </authorList>
    </citation>
    <scope>NUCLEOTIDE SEQUENCE [LARGE SCALE MRNA] (ISOFORM 2)</scope>
</reference>
<reference key="3">
    <citation type="journal article" date="2010" name="Cell">
        <title>A tissue-specific atlas of mouse protein phosphorylation and expression.</title>
        <authorList>
            <person name="Huttlin E.L."/>
            <person name="Jedrychowski M.P."/>
            <person name="Elias J.E."/>
            <person name="Goswami T."/>
            <person name="Rad R."/>
            <person name="Beausoleil S.A."/>
            <person name="Villen J."/>
            <person name="Haas W."/>
            <person name="Sowa M.E."/>
            <person name="Gygi S.P."/>
        </authorList>
    </citation>
    <scope>IDENTIFICATION BY MASS SPECTROMETRY [LARGE SCALE ANALYSIS]</scope>
    <source>
        <tissue>Testis</tissue>
    </source>
</reference>
<name>GRPL2_MOUSE</name>
<evidence type="ECO:0000255" key="1"/>
<evidence type="ECO:0000256" key="2">
    <source>
        <dbReference type="SAM" id="MobiDB-lite"/>
    </source>
</evidence>
<evidence type="ECO:0000303" key="3">
    <source>
    </source>
</evidence>
<evidence type="ECO:0000305" key="4"/>
<accession>Q9CQ35</accession>
<accession>Q148R1</accession>
<accession>Q3TTM5</accession>
<feature type="chain" id="PRO_0000324388" description="GLIPR1-like protein 2">
    <location>
        <begin position="1"/>
        <end position="332"/>
    </location>
</feature>
<feature type="transmembrane region" description="Helical" evidence="1">
    <location>
        <begin position="253"/>
        <end position="273"/>
    </location>
</feature>
<feature type="domain" description="SCP">
    <location>
        <begin position="57"/>
        <end position="191"/>
    </location>
</feature>
<feature type="region of interest" description="Disordered" evidence="2">
    <location>
        <begin position="293"/>
        <end position="332"/>
    </location>
</feature>
<feature type="compositionally biased region" description="Acidic residues" evidence="2">
    <location>
        <begin position="300"/>
        <end position="332"/>
    </location>
</feature>
<feature type="glycosylation site" description="N-linked (GlcNAc...) asparagine" evidence="1">
    <location>
        <position position="145"/>
    </location>
</feature>
<feature type="splice variant" id="VSP_032247" description="In isoform 2." evidence="3">
    <original>NTV</original>
    <variation>KTK</variation>
    <location>
        <begin position="224"/>
        <end position="226"/>
    </location>
</feature>
<feature type="splice variant" id="VSP_032248" description="In isoform 2." evidence="3">
    <location>
        <begin position="227"/>
        <end position="332"/>
    </location>
</feature>
<protein>
    <recommendedName>
        <fullName>GLIPR1-like protein 2</fullName>
    </recommendedName>
</protein>
<sequence length="332" mass="37784">MKASLPWSVVWRAQSNYVRLRRVLKLCELWLLLVGSGLNAKLPLEEDVDFINEYVGLHNELRGTVFPPGVNLRFMTWDVALSRTARAWGKKCMYSRNTHLDKLHESHPVFTEIGENMWVGPVEDFTVTTAIRSWHEERKSYSYLNDTCVEDQNCSHYIQLVWDSSYKVGCAVTSCARAGGFTHAALFICNYAPGGTLTRRPYQAGQFCSRCGPGDQCTDYLCSNTVRDEATYYQFWYPPWEKPRPVVCNPMCIFILFLRVASLLLCVIVVLIVQSRFPVILMETPTIISAEEEGKTEVEIVMEEGEGEGEGGEGEGEGEEKEEEEMLEEDEQ</sequence>
<dbReference type="EMBL" id="AK014846">
    <property type="protein sequence ID" value="BAB29580.1"/>
    <property type="molecule type" value="mRNA"/>
</dbReference>
<dbReference type="EMBL" id="AK015834">
    <property type="protein sequence ID" value="BAB29994.1"/>
    <property type="molecule type" value="mRNA"/>
</dbReference>
<dbReference type="EMBL" id="AK161292">
    <property type="protein sequence ID" value="BAE36300.1"/>
    <property type="status" value="ALT_SEQ"/>
    <property type="molecule type" value="mRNA"/>
</dbReference>
<dbReference type="EMBL" id="BC118017">
    <property type="protein sequence ID" value="AAI18018.1"/>
    <property type="molecule type" value="mRNA"/>
</dbReference>
<dbReference type="CCDS" id="CCDS24171.1">
    <molecule id="Q9CQ35-1"/>
</dbReference>
<dbReference type="CCDS" id="CCDS83755.1">
    <molecule id="Q9CQ35-2"/>
</dbReference>
<dbReference type="RefSeq" id="NP_001334086.1">
    <molecule id="Q9CQ35-2"/>
    <property type="nucleotide sequence ID" value="NM_001347157.1"/>
</dbReference>
<dbReference type="RefSeq" id="NP_080499.1">
    <molecule id="Q9CQ35-1"/>
    <property type="nucleotide sequence ID" value="NM_026223.2"/>
</dbReference>
<dbReference type="SMR" id="Q9CQ35"/>
<dbReference type="FunCoup" id="Q9CQ35">
    <property type="interactions" value="63"/>
</dbReference>
<dbReference type="STRING" id="10090.ENSMUSP00000020434"/>
<dbReference type="GlyCosmos" id="Q9CQ35">
    <property type="glycosylation" value="1 site, No reported glycans"/>
</dbReference>
<dbReference type="GlyGen" id="Q9CQ35">
    <property type="glycosylation" value="1 site"/>
</dbReference>
<dbReference type="iPTMnet" id="Q9CQ35"/>
<dbReference type="PhosphoSitePlus" id="Q9CQ35"/>
<dbReference type="SwissPalm" id="Q9CQ35"/>
<dbReference type="PaxDb" id="10090-ENSMUSP00000020434"/>
<dbReference type="ProteomicsDB" id="271439">
    <molecule id="Q9CQ35-1"/>
</dbReference>
<dbReference type="ProteomicsDB" id="271440">
    <molecule id="Q9CQ35-2"/>
</dbReference>
<dbReference type="Antibodypedia" id="29602">
    <property type="antibodies" value="95 antibodies from 20 providers"/>
</dbReference>
<dbReference type="DNASU" id="67537"/>
<dbReference type="Ensembl" id="ENSMUST00000020434.4">
    <molecule id="Q9CQ35-1"/>
    <property type="protein sequence ID" value="ENSMUSP00000020434.4"/>
    <property type="gene ID" value="ENSMUSG00000020214.11"/>
</dbReference>
<dbReference type="Ensembl" id="ENSMUST00000148897.8">
    <molecule id="Q9CQ35-2"/>
    <property type="protein sequence ID" value="ENSMUSP00000122771.2"/>
    <property type="gene ID" value="ENSMUSG00000020214.11"/>
</dbReference>
<dbReference type="GeneID" id="67537"/>
<dbReference type="KEGG" id="mmu:67537"/>
<dbReference type="UCSC" id="uc007hal.1">
    <molecule id="Q9CQ35-1"/>
    <property type="organism name" value="mouse"/>
</dbReference>
<dbReference type="UCSC" id="uc011xnh.1">
    <molecule id="Q9CQ35-2"/>
    <property type="organism name" value="mouse"/>
</dbReference>
<dbReference type="AGR" id="MGI:1914787"/>
<dbReference type="CTD" id="144321"/>
<dbReference type="MGI" id="MGI:1914787">
    <property type="gene designation" value="Glipr1l2"/>
</dbReference>
<dbReference type="VEuPathDB" id="HostDB:ENSMUSG00000020214"/>
<dbReference type="eggNOG" id="KOG3017">
    <property type="taxonomic scope" value="Eukaryota"/>
</dbReference>
<dbReference type="GeneTree" id="ENSGT00940000162357"/>
<dbReference type="HOGENOM" id="CLU_035730_2_0_1"/>
<dbReference type="InParanoid" id="Q9CQ35"/>
<dbReference type="OMA" id="YYQFWYP"/>
<dbReference type="OrthoDB" id="43654at2759"/>
<dbReference type="PhylomeDB" id="Q9CQ35"/>
<dbReference type="TreeFam" id="TF316148"/>
<dbReference type="BioGRID-ORCS" id="67537">
    <property type="hits" value="1 hit in 77 CRISPR screens"/>
</dbReference>
<dbReference type="ChiTaRS" id="Glipr1l2">
    <property type="organism name" value="mouse"/>
</dbReference>
<dbReference type="PRO" id="PR:Q9CQ35"/>
<dbReference type="Proteomes" id="UP000000589">
    <property type="component" value="Chromosome 10"/>
</dbReference>
<dbReference type="RNAct" id="Q9CQ35">
    <property type="molecule type" value="protein"/>
</dbReference>
<dbReference type="Bgee" id="ENSMUSG00000020214">
    <property type="expression patterns" value="Expressed in spermatocyte and 6 other cell types or tissues"/>
</dbReference>
<dbReference type="GO" id="GO:0016020">
    <property type="term" value="C:membrane"/>
    <property type="evidence" value="ECO:0007669"/>
    <property type="project" value="UniProtKB-SubCell"/>
</dbReference>
<dbReference type="Gene3D" id="3.40.33.10">
    <property type="entry name" value="CAP"/>
    <property type="match status" value="1"/>
</dbReference>
<dbReference type="InterPro" id="IPR014044">
    <property type="entry name" value="CAP_dom"/>
</dbReference>
<dbReference type="InterPro" id="IPR035940">
    <property type="entry name" value="CAP_sf"/>
</dbReference>
<dbReference type="InterPro" id="IPR001283">
    <property type="entry name" value="CRISP-related"/>
</dbReference>
<dbReference type="InterPro" id="IPR002413">
    <property type="entry name" value="V5_allergen-like"/>
</dbReference>
<dbReference type="PANTHER" id="PTHR10334">
    <property type="entry name" value="CYSTEINE-RICH SECRETORY PROTEIN-RELATED"/>
    <property type="match status" value="1"/>
</dbReference>
<dbReference type="Pfam" id="PF00188">
    <property type="entry name" value="CAP"/>
    <property type="match status" value="1"/>
</dbReference>
<dbReference type="PRINTS" id="PR00838">
    <property type="entry name" value="V5ALLERGEN"/>
</dbReference>
<dbReference type="PRINTS" id="PR00837">
    <property type="entry name" value="V5TPXLIKE"/>
</dbReference>
<dbReference type="SMART" id="SM00198">
    <property type="entry name" value="SCP"/>
    <property type="match status" value="1"/>
</dbReference>
<dbReference type="SUPFAM" id="SSF55797">
    <property type="entry name" value="PR-1-like"/>
    <property type="match status" value="1"/>
</dbReference>
<keyword id="KW-0025">Alternative splicing</keyword>
<keyword id="KW-0325">Glycoprotein</keyword>
<keyword id="KW-0472">Membrane</keyword>
<keyword id="KW-1185">Reference proteome</keyword>
<keyword id="KW-0812">Transmembrane</keyword>
<keyword id="KW-1133">Transmembrane helix</keyword>
<comment type="subcellular location">
    <subcellularLocation>
        <location evidence="4">Membrane</location>
        <topology evidence="4">Single-pass membrane protein</topology>
    </subcellularLocation>
</comment>
<comment type="alternative products">
    <event type="alternative splicing"/>
    <isoform>
        <id>Q9CQ35-1</id>
        <name>1</name>
        <sequence type="displayed"/>
    </isoform>
    <isoform>
        <id>Q9CQ35-2</id>
        <name>2</name>
        <sequence type="described" ref="VSP_032247 VSP_032248"/>
    </isoform>
</comment>
<comment type="similarity">
    <text evidence="4">Belongs to the CRISP family.</text>
</comment>
<comment type="sequence caution" evidence="4">
    <conflict type="erroneous termination">
        <sequence resource="EMBL-CDS" id="BAE36300"/>
    </conflict>
    <text>Truncated C-terminus.</text>
</comment>